<evidence type="ECO:0000255" key="1">
    <source>
        <dbReference type="HAMAP-Rule" id="MF_00091"/>
    </source>
</evidence>
<keyword id="KW-0071">Autoinducer synthesis</keyword>
<keyword id="KW-0408">Iron</keyword>
<keyword id="KW-0456">Lyase</keyword>
<keyword id="KW-0479">Metal-binding</keyword>
<keyword id="KW-0673">Quorum sensing</keyword>
<feature type="chain" id="PRO_1000075463" description="S-ribosylhomocysteine lyase">
    <location>
        <begin position="1"/>
        <end position="156"/>
    </location>
</feature>
<feature type="binding site" evidence="1">
    <location>
        <position position="56"/>
    </location>
    <ligand>
        <name>Fe cation</name>
        <dbReference type="ChEBI" id="CHEBI:24875"/>
    </ligand>
</feature>
<feature type="binding site" evidence="1">
    <location>
        <position position="60"/>
    </location>
    <ligand>
        <name>Fe cation</name>
        <dbReference type="ChEBI" id="CHEBI:24875"/>
    </ligand>
</feature>
<feature type="binding site" evidence="1">
    <location>
        <position position="123"/>
    </location>
    <ligand>
        <name>Fe cation</name>
        <dbReference type="ChEBI" id="CHEBI:24875"/>
    </ligand>
</feature>
<proteinExistence type="inferred from homology"/>
<comment type="function">
    <text evidence="1">Involved in the synthesis of autoinducer 2 (AI-2) which is secreted by bacteria and is used to communicate both the cell density and the metabolic potential of the environment. The regulation of gene expression in response to changes in cell density is called quorum sensing. Catalyzes the transformation of S-ribosylhomocysteine (RHC) to homocysteine (HC) and 4,5-dihydroxy-2,3-pentadione (DPD).</text>
</comment>
<comment type="catalytic activity">
    <reaction evidence="1">
        <text>S-(5-deoxy-D-ribos-5-yl)-L-homocysteine = (S)-4,5-dihydroxypentane-2,3-dione + L-homocysteine</text>
        <dbReference type="Rhea" id="RHEA:17753"/>
        <dbReference type="ChEBI" id="CHEBI:29484"/>
        <dbReference type="ChEBI" id="CHEBI:58195"/>
        <dbReference type="ChEBI" id="CHEBI:58199"/>
        <dbReference type="EC" id="4.4.1.21"/>
    </reaction>
</comment>
<comment type="cofactor">
    <cofactor evidence="1">
        <name>Fe cation</name>
        <dbReference type="ChEBI" id="CHEBI:24875"/>
    </cofactor>
    <text evidence="1">Binds 1 Fe cation per subunit.</text>
</comment>
<comment type="subunit">
    <text evidence="1">Homodimer.</text>
</comment>
<comment type="similarity">
    <text evidence="1">Belongs to the LuxS family.</text>
</comment>
<name>LUXS_STAA9</name>
<dbReference type="EC" id="4.4.1.21" evidence="1"/>
<dbReference type="EMBL" id="CP000703">
    <property type="protein sequence ID" value="ABQ49952.1"/>
    <property type="molecule type" value="Genomic_DNA"/>
</dbReference>
<dbReference type="RefSeq" id="WP_000164421.1">
    <property type="nucleotide sequence ID" value="NC_009487.1"/>
</dbReference>
<dbReference type="SMR" id="A5IUS9"/>
<dbReference type="KEGG" id="saj:SaurJH9_2170"/>
<dbReference type="HOGENOM" id="CLU_107531_2_0_9"/>
<dbReference type="GO" id="GO:0005506">
    <property type="term" value="F:iron ion binding"/>
    <property type="evidence" value="ECO:0007669"/>
    <property type="project" value="InterPro"/>
</dbReference>
<dbReference type="GO" id="GO:0043768">
    <property type="term" value="F:S-ribosylhomocysteine lyase activity"/>
    <property type="evidence" value="ECO:0007669"/>
    <property type="project" value="UniProtKB-UniRule"/>
</dbReference>
<dbReference type="GO" id="GO:0009372">
    <property type="term" value="P:quorum sensing"/>
    <property type="evidence" value="ECO:0007669"/>
    <property type="project" value="UniProtKB-UniRule"/>
</dbReference>
<dbReference type="Gene3D" id="3.30.1360.80">
    <property type="entry name" value="S-ribosylhomocysteinase (LuxS)"/>
    <property type="match status" value="1"/>
</dbReference>
<dbReference type="HAMAP" id="MF_00091">
    <property type="entry name" value="LuxS"/>
    <property type="match status" value="1"/>
</dbReference>
<dbReference type="InterPro" id="IPR037005">
    <property type="entry name" value="LuxS_sf"/>
</dbReference>
<dbReference type="InterPro" id="IPR011249">
    <property type="entry name" value="Metalloenz_LuxS/M16"/>
</dbReference>
<dbReference type="InterPro" id="IPR003815">
    <property type="entry name" value="S-ribosylhomocysteinase"/>
</dbReference>
<dbReference type="NCBIfam" id="NF002604">
    <property type="entry name" value="PRK02260.1-4"/>
    <property type="match status" value="1"/>
</dbReference>
<dbReference type="PANTHER" id="PTHR35799">
    <property type="entry name" value="S-RIBOSYLHOMOCYSTEINE LYASE"/>
    <property type="match status" value="1"/>
</dbReference>
<dbReference type="PANTHER" id="PTHR35799:SF1">
    <property type="entry name" value="S-RIBOSYLHOMOCYSTEINE LYASE"/>
    <property type="match status" value="1"/>
</dbReference>
<dbReference type="Pfam" id="PF02664">
    <property type="entry name" value="LuxS"/>
    <property type="match status" value="1"/>
</dbReference>
<dbReference type="PIRSF" id="PIRSF006160">
    <property type="entry name" value="AI2"/>
    <property type="match status" value="1"/>
</dbReference>
<dbReference type="PRINTS" id="PR01487">
    <property type="entry name" value="LUXSPROTEIN"/>
</dbReference>
<dbReference type="SUPFAM" id="SSF63411">
    <property type="entry name" value="LuxS/MPP-like metallohydrolase"/>
    <property type="match status" value="1"/>
</dbReference>
<sequence>MTKMNVESFNLDHTKVVAPFIRLAGTMEGLNGDVIHKYDIRFKQPNKEHMDMPGLHSLEHLMAENIRNHSDKVVDLSPMGCQTGFYVSFINHDNYDDVLNIVEATLNDVLNATEVPACNEVQCGWAASHSLEGAKTIAQAFLDKRNEWHDVFGTGK</sequence>
<organism>
    <name type="scientific">Staphylococcus aureus (strain JH9)</name>
    <dbReference type="NCBI Taxonomy" id="359786"/>
    <lineage>
        <taxon>Bacteria</taxon>
        <taxon>Bacillati</taxon>
        <taxon>Bacillota</taxon>
        <taxon>Bacilli</taxon>
        <taxon>Bacillales</taxon>
        <taxon>Staphylococcaceae</taxon>
        <taxon>Staphylococcus</taxon>
    </lineage>
</organism>
<accession>A5IUS9</accession>
<protein>
    <recommendedName>
        <fullName evidence="1">S-ribosylhomocysteine lyase</fullName>
        <ecNumber evidence="1">4.4.1.21</ecNumber>
    </recommendedName>
    <alternativeName>
        <fullName evidence="1">AI-2 synthesis protein</fullName>
    </alternativeName>
    <alternativeName>
        <fullName evidence="1">Autoinducer-2 production protein LuxS</fullName>
    </alternativeName>
</protein>
<reference key="1">
    <citation type="submission" date="2007-05" db="EMBL/GenBank/DDBJ databases">
        <title>Complete sequence of chromosome of Staphylococcus aureus subsp. aureus JH9.</title>
        <authorList>
            <consortium name="US DOE Joint Genome Institute"/>
            <person name="Copeland A."/>
            <person name="Lucas S."/>
            <person name="Lapidus A."/>
            <person name="Barry K."/>
            <person name="Detter J.C."/>
            <person name="Glavina del Rio T."/>
            <person name="Hammon N."/>
            <person name="Israni S."/>
            <person name="Pitluck S."/>
            <person name="Chain P."/>
            <person name="Malfatti S."/>
            <person name="Shin M."/>
            <person name="Vergez L."/>
            <person name="Schmutz J."/>
            <person name="Larimer F."/>
            <person name="Land M."/>
            <person name="Hauser L."/>
            <person name="Kyrpides N."/>
            <person name="Kim E."/>
            <person name="Tomasz A."/>
            <person name="Richardson P."/>
        </authorList>
    </citation>
    <scope>NUCLEOTIDE SEQUENCE [LARGE SCALE GENOMIC DNA]</scope>
    <source>
        <strain>JH9</strain>
    </source>
</reference>
<gene>
    <name evidence="1" type="primary">luxS</name>
    <name type="ordered locus">SaurJH9_2170</name>
</gene>